<keyword id="KW-0004">4Fe-4S</keyword>
<keyword id="KW-0997">Cell inner membrane</keyword>
<keyword id="KW-1003">Cell membrane</keyword>
<keyword id="KW-0408">Iron</keyword>
<keyword id="KW-0411">Iron-sulfur</keyword>
<keyword id="KW-0472">Membrane</keyword>
<keyword id="KW-0479">Metal-binding</keyword>
<keyword id="KW-0520">NAD</keyword>
<keyword id="KW-0874">Quinone</keyword>
<keyword id="KW-1278">Translocase</keyword>
<keyword id="KW-0813">Transport</keyword>
<keyword id="KW-0830">Ubiquinone</keyword>
<proteinExistence type="inferred from homology"/>
<feature type="chain" id="PRO_0000376309" description="NADH-quinone oxidoreductase subunit B">
    <location>
        <begin position="1"/>
        <end position="225"/>
    </location>
</feature>
<feature type="binding site" evidence="1">
    <location>
        <position position="68"/>
    </location>
    <ligand>
        <name>[4Fe-4S] cluster</name>
        <dbReference type="ChEBI" id="CHEBI:49883"/>
    </ligand>
</feature>
<feature type="binding site" evidence="1">
    <location>
        <position position="69"/>
    </location>
    <ligand>
        <name>[4Fe-4S] cluster</name>
        <dbReference type="ChEBI" id="CHEBI:49883"/>
    </ligand>
</feature>
<feature type="binding site" evidence="1">
    <location>
        <position position="134"/>
    </location>
    <ligand>
        <name>[4Fe-4S] cluster</name>
        <dbReference type="ChEBI" id="CHEBI:49883"/>
    </ligand>
</feature>
<feature type="binding site" evidence="1">
    <location>
        <position position="163"/>
    </location>
    <ligand>
        <name>[4Fe-4S] cluster</name>
        <dbReference type="ChEBI" id="CHEBI:49883"/>
    </ligand>
</feature>
<organism>
    <name type="scientific">Pseudomonas paraeruginosa (strain DSM 24068 / PA7)</name>
    <name type="common">Pseudomonas aeruginosa (strain PA7)</name>
    <dbReference type="NCBI Taxonomy" id="381754"/>
    <lineage>
        <taxon>Bacteria</taxon>
        <taxon>Pseudomonadati</taxon>
        <taxon>Pseudomonadota</taxon>
        <taxon>Gammaproteobacteria</taxon>
        <taxon>Pseudomonadales</taxon>
        <taxon>Pseudomonadaceae</taxon>
        <taxon>Pseudomonas</taxon>
        <taxon>Pseudomonas paraeruginosa</taxon>
    </lineage>
</organism>
<sequence length="225" mass="25411">MQYKLTRIDPDAANDQYPIGERETVADPLVEGQVHKNIFMGKLEDVLNSTVNWGRKNSLWPYNFGLSCCYVEMTTAFTAPHDIARFGAEVIRASPRQADFMVIAGTCFIKMAPVIQRLYEQMLEPKWVISMGSCANSGGMYDIYSVVQGVDKFLPVDVYIPGCPPRPEAFLQGLMLLQESIGQERRPLSWVVGDQGVYRADMPAQKDLKREQRIQVTNLRSPDEV</sequence>
<protein>
    <recommendedName>
        <fullName evidence="1">NADH-quinone oxidoreductase subunit B</fullName>
        <ecNumber evidence="1">7.1.1.-</ecNumber>
    </recommendedName>
    <alternativeName>
        <fullName evidence="1">NADH dehydrogenase I subunit B</fullName>
    </alternativeName>
    <alternativeName>
        <fullName evidence="1">NDH-1 subunit B</fullName>
    </alternativeName>
</protein>
<name>NUOB_PSEP7</name>
<dbReference type="EC" id="7.1.1.-" evidence="1"/>
<dbReference type="EMBL" id="CP000744">
    <property type="protein sequence ID" value="ABR85882.1"/>
    <property type="molecule type" value="Genomic_DNA"/>
</dbReference>
<dbReference type="RefSeq" id="WP_012075443.1">
    <property type="nucleotide sequence ID" value="NC_009656.1"/>
</dbReference>
<dbReference type="SMR" id="A6V4E8"/>
<dbReference type="GeneID" id="77220825"/>
<dbReference type="KEGG" id="pap:PSPA7_2569"/>
<dbReference type="HOGENOM" id="CLU_055737_7_3_6"/>
<dbReference type="Proteomes" id="UP000001582">
    <property type="component" value="Chromosome"/>
</dbReference>
<dbReference type="GO" id="GO:0005886">
    <property type="term" value="C:plasma membrane"/>
    <property type="evidence" value="ECO:0007669"/>
    <property type="project" value="UniProtKB-SubCell"/>
</dbReference>
<dbReference type="GO" id="GO:0045271">
    <property type="term" value="C:respiratory chain complex I"/>
    <property type="evidence" value="ECO:0007669"/>
    <property type="project" value="TreeGrafter"/>
</dbReference>
<dbReference type="GO" id="GO:0051539">
    <property type="term" value="F:4 iron, 4 sulfur cluster binding"/>
    <property type="evidence" value="ECO:0007669"/>
    <property type="project" value="UniProtKB-KW"/>
</dbReference>
<dbReference type="GO" id="GO:0005506">
    <property type="term" value="F:iron ion binding"/>
    <property type="evidence" value="ECO:0007669"/>
    <property type="project" value="UniProtKB-UniRule"/>
</dbReference>
<dbReference type="GO" id="GO:0008137">
    <property type="term" value="F:NADH dehydrogenase (ubiquinone) activity"/>
    <property type="evidence" value="ECO:0007669"/>
    <property type="project" value="InterPro"/>
</dbReference>
<dbReference type="GO" id="GO:0050136">
    <property type="term" value="F:NADH:ubiquinone reductase (non-electrogenic) activity"/>
    <property type="evidence" value="ECO:0007669"/>
    <property type="project" value="UniProtKB-UniRule"/>
</dbReference>
<dbReference type="GO" id="GO:0048038">
    <property type="term" value="F:quinone binding"/>
    <property type="evidence" value="ECO:0007669"/>
    <property type="project" value="UniProtKB-KW"/>
</dbReference>
<dbReference type="GO" id="GO:0009060">
    <property type="term" value="P:aerobic respiration"/>
    <property type="evidence" value="ECO:0007669"/>
    <property type="project" value="TreeGrafter"/>
</dbReference>
<dbReference type="GO" id="GO:0015990">
    <property type="term" value="P:electron transport coupled proton transport"/>
    <property type="evidence" value="ECO:0007669"/>
    <property type="project" value="TreeGrafter"/>
</dbReference>
<dbReference type="FunFam" id="3.40.50.12280:FF:000002">
    <property type="entry name" value="NADH-quinone oxidoreductase subunit B"/>
    <property type="match status" value="1"/>
</dbReference>
<dbReference type="Gene3D" id="3.40.50.12280">
    <property type="match status" value="1"/>
</dbReference>
<dbReference type="HAMAP" id="MF_01356">
    <property type="entry name" value="NDH1_NuoB"/>
    <property type="match status" value="1"/>
</dbReference>
<dbReference type="InterPro" id="IPR006137">
    <property type="entry name" value="NADH_UbQ_OxRdtase-like_20kDa"/>
</dbReference>
<dbReference type="InterPro" id="IPR006138">
    <property type="entry name" value="NADH_UQ_OxRdtase_20Kd_su"/>
</dbReference>
<dbReference type="NCBIfam" id="TIGR01957">
    <property type="entry name" value="nuoB_fam"/>
    <property type="match status" value="1"/>
</dbReference>
<dbReference type="NCBIfam" id="NF005012">
    <property type="entry name" value="PRK06411.1"/>
    <property type="match status" value="1"/>
</dbReference>
<dbReference type="PANTHER" id="PTHR11995">
    <property type="entry name" value="NADH DEHYDROGENASE"/>
    <property type="match status" value="1"/>
</dbReference>
<dbReference type="PANTHER" id="PTHR11995:SF14">
    <property type="entry name" value="NADH DEHYDROGENASE [UBIQUINONE] IRON-SULFUR PROTEIN 7, MITOCHONDRIAL"/>
    <property type="match status" value="1"/>
</dbReference>
<dbReference type="Pfam" id="PF01058">
    <property type="entry name" value="Oxidored_q6"/>
    <property type="match status" value="1"/>
</dbReference>
<dbReference type="SUPFAM" id="SSF56770">
    <property type="entry name" value="HydA/Nqo6-like"/>
    <property type="match status" value="1"/>
</dbReference>
<dbReference type="PROSITE" id="PS01150">
    <property type="entry name" value="COMPLEX1_20K"/>
    <property type="match status" value="1"/>
</dbReference>
<comment type="function">
    <text evidence="1">NDH-1 shuttles electrons from NADH, via FMN and iron-sulfur (Fe-S) centers, to quinones in the respiratory chain. The immediate electron acceptor for the enzyme in this species is believed to be ubiquinone. Couples the redox reaction to proton translocation (for every two electrons transferred, four hydrogen ions are translocated across the cytoplasmic membrane), and thus conserves the redox energy in a proton gradient.</text>
</comment>
<comment type="catalytic activity">
    <reaction evidence="1">
        <text>a quinone + NADH + 5 H(+)(in) = a quinol + NAD(+) + 4 H(+)(out)</text>
        <dbReference type="Rhea" id="RHEA:57888"/>
        <dbReference type="ChEBI" id="CHEBI:15378"/>
        <dbReference type="ChEBI" id="CHEBI:24646"/>
        <dbReference type="ChEBI" id="CHEBI:57540"/>
        <dbReference type="ChEBI" id="CHEBI:57945"/>
        <dbReference type="ChEBI" id="CHEBI:132124"/>
    </reaction>
</comment>
<comment type="cofactor">
    <cofactor evidence="1">
        <name>[4Fe-4S] cluster</name>
        <dbReference type="ChEBI" id="CHEBI:49883"/>
    </cofactor>
    <text evidence="1">Binds 1 [4Fe-4S] cluster.</text>
</comment>
<comment type="subunit">
    <text evidence="1">NDH-1 is composed of 13 different subunits. Subunits NuoB, CD, E, F, and G constitute the peripheral sector of the complex.</text>
</comment>
<comment type="subcellular location">
    <subcellularLocation>
        <location evidence="1">Cell inner membrane</location>
        <topology evidence="1">Peripheral membrane protein</topology>
        <orientation evidence="1">Cytoplasmic side</orientation>
    </subcellularLocation>
</comment>
<comment type="similarity">
    <text evidence="1">Belongs to the complex I 20 kDa subunit family.</text>
</comment>
<gene>
    <name evidence="1" type="primary">nuoB</name>
    <name type="ordered locus">PSPA7_2569</name>
</gene>
<reference key="1">
    <citation type="submission" date="2007-06" db="EMBL/GenBank/DDBJ databases">
        <authorList>
            <person name="Dodson R.J."/>
            <person name="Harkins D."/>
            <person name="Paulsen I.T."/>
        </authorList>
    </citation>
    <scope>NUCLEOTIDE SEQUENCE [LARGE SCALE GENOMIC DNA]</scope>
    <source>
        <strain>DSM 24068 / PA7</strain>
    </source>
</reference>
<evidence type="ECO:0000255" key="1">
    <source>
        <dbReference type="HAMAP-Rule" id="MF_01356"/>
    </source>
</evidence>
<accession>A6V4E8</accession>